<keyword id="KW-0002">3D-structure</keyword>
<keyword id="KW-0963">Cytoplasm</keyword>
<keyword id="KW-0903">Direct protein sequencing</keyword>
<keyword id="KW-0378">Hydrolase</keyword>
<keyword id="KW-0539">Nucleus</keyword>
<keyword id="KW-0597">Phosphoprotein</keyword>
<keyword id="KW-0904">Protein phosphatase</keyword>
<keyword id="KW-1267">Proteomics identification</keyword>
<keyword id="KW-1185">Reference proteome</keyword>
<keyword id="KW-0728">SH3 domain</keyword>
<comment type="function">
    <text evidence="5 6">Interferes with CBL-mediated down-regulation and degradation of receptor-type tyrosine kinases. Promotes accumulation of activated target receptors, such as T-cell receptors and EGFR, on the cell surface. Exhibits tyrosine phosphatase activity toward several substrates including EGFR, FAK, SYK, and ZAP70. Down-regulates proteins that are dually modified by both protein tyrosine phosphorylation and ubiquitination.</text>
</comment>
<comment type="catalytic activity">
    <reaction evidence="6">
        <text>O-phospho-L-tyrosyl-[protein] + H2O = L-tyrosyl-[protein] + phosphate</text>
        <dbReference type="Rhea" id="RHEA:10684"/>
        <dbReference type="Rhea" id="RHEA-COMP:10136"/>
        <dbReference type="Rhea" id="RHEA-COMP:20101"/>
        <dbReference type="ChEBI" id="CHEBI:15377"/>
        <dbReference type="ChEBI" id="CHEBI:43474"/>
        <dbReference type="ChEBI" id="CHEBI:46858"/>
        <dbReference type="ChEBI" id="CHEBI:61978"/>
        <dbReference type="EC" id="3.1.3.48"/>
    </reaction>
</comment>
<comment type="subunit">
    <text evidence="2 5 7">Homodimer. Interacts with JAK2 (in vitro) (By similarity). Interacts with CBL (PubMed:15159412). Part of a complex containing CBL and activated EGFR (PubMed:15159412). Interacts with ubiquitin and with mono-ubiquitinated proteins (PubMed:15159412). Interacts with ZAP70 (ubiquitinated form) (PubMed:26903241).</text>
</comment>
<comment type="interaction">
    <interactant intactId="EBI-1380492">
        <id>Q8TF42</id>
    </interactant>
    <interactant intactId="EBI-17289784">
        <id>Q96PG8</id>
        <label>BBC3</label>
    </interactant>
    <organismsDiffer>false</organismsDiffer>
    <experiments>3</experiments>
</comment>
<comment type="interaction">
    <interactant intactId="EBI-1380492">
        <id>Q8TF42</id>
    </interactant>
    <interactant intactId="EBI-744027">
        <id>Q13191</id>
        <label>CBLB</label>
    </interactant>
    <organismsDiffer>false</organismsDiffer>
    <experiments>6</experiments>
</comment>
<comment type="interaction">
    <interactant intactId="EBI-1380492">
        <id>Q8TF42</id>
    </interactant>
    <interactant intactId="EBI-17967022">
        <id>Q96LY2-2</id>
        <label>CCDC74B</label>
    </interactant>
    <organismsDiffer>false</organismsDiffer>
    <experiments>3</experiments>
</comment>
<comment type="interaction">
    <interactant intactId="EBI-1380492">
        <id>Q8TF42</id>
    </interactant>
    <interactant intactId="EBI-724310">
        <id>Q15038</id>
        <label>DAZAP2</label>
    </interactant>
    <organismsDiffer>false</organismsDiffer>
    <experiments>6</experiments>
</comment>
<comment type="interaction">
    <interactant intactId="EBI-1380492">
        <id>Q8TF42</id>
    </interactant>
    <interactant intactId="EBI-11988027">
        <id>Q9NRI5-2</id>
        <label>DISC1</label>
    </interactant>
    <organismsDiffer>false</organismsDiffer>
    <experiments>3</experiments>
</comment>
<comment type="interaction">
    <interactant intactId="EBI-1380492">
        <id>Q8TF42</id>
    </interactant>
    <interactant intactId="EBI-12019838">
        <id>Q9P1A6-3</id>
        <label>DLGAP2</label>
    </interactant>
    <organismsDiffer>false</organismsDiffer>
    <experiments>3</experiments>
</comment>
<comment type="interaction">
    <interactant intactId="EBI-1380492">
        <id>Q8TF42</id>
    </interactant>
    <interactant intactId="EBI-9679045">
        <id>Q9NQL9</id>
        <label>DMRT3</label>
    </interactant>
    <organismsDiffer>false</organismsDiffer>
    <experiments>3</experiments>
</comment>
<comment type="interaction">
    <interactant intactId="EBI-1380492">
        <id>Q8TF42</id>
    </interactant>
    <interactant intactId="EBI-20861623">
        <id>Q14183</id>
        <label>DOC2A</label>
    </interactant>
    <organismsDiffer>false</organismsDiffer>
    <experiments>7</experiments>
</comment>
<comment type="interaction">
    <interactant intactId="EBI-1380492">
        <id>Q8TF42</id>
    </interactant>
    <interactant intactId="EBI-2340258">
        <id>Q8N9I9</id>
        <label>DTX3</label>
    </interactant>
    <organismsDiffer>false</organismsDiffer>
    <experiments>3</experiments>
</comment>
<comment type="interaction">
    <interactant intactId="EBI-1380492">
        <id>Q8TF42</id>
    </interactant>
    <interactant intactId="EBI-11525448">
        <id>O43281-2</id>
        <label>EFS</label>
    </interactant>
    <organismsDiffer>false</organismsDiffer>
    <experiments>3</experiments>
</comment>
<comment type="interaction">
    <interactant intactId="EBI-1380492">
        <id>Q8TF42</id>
    </interactant>
    <interactant intactId="EBI-7957930">
        <id>Q92567</id>
        <label>FAM168A</label>
    </interactant>
    <organismsDiffer>false</organismsDiffer>
    <experiments>4</experiments>
</comment>
<comment type="interaction">
    <interactant intactId="EBI-1380492">
        <id>Q8TF42</id>
    </interactant>
    <interactant intactId="EBI-18304435">
        <id>Q5JX71</id>
        <label>FAM209A</label>
    </interactant>
    <organismsDiffer>false</organismsDiffer>
    <experiments>2</experiments>
</comment>
<comment type="interaction">
    <interactant intactId="EBI-1380492">
        <id>Q8TF42</id>
    </interactant>
    <interactant intactId="EBI-5329558">
        <id>P14652</id>
        <label>HOXB2</label>
    </interactant>
    <organismsDiffer>false</organismsDiffer>
    <experiments>3</experiments>
</comment>
<comment type="interaction">
    <interactant intactId="EBI-1380492">
        <id>Q8TF42</id>
    </interactant>
    <interactant intactId="EBI-6509505">
        <id>Q0VD86</id>
        <label>INCA1</label>
    </interactant>
    <organismsDiffer>false</organismsDiffer>
    <experiments>3</experiments>
</comment>
<comment type="interaction">
    <interactant intactId="EBI-1380492">
        <id>Q8TF42</id>
    </interactant>
    <interactant intactId="EBI-399080">
        <id>Q92993</id>
        <label>KAT5</label>
    </interactant>
    <organismsDiffer>false</organismsDiffer>
    <experiments>3</experiments>
</comment>
<comment type="interaction">
    <interactant intactId="EBI-1380492">
        <id>Q8TF42</id>
    </interactant>
    <interactant intactId="EBI-710124">
        <id>O60341</id>
        <label>KDM1A</label>
    </interactant>
    <organismsDiffer>false</organismsDiffer>
    <experiments>3</experiments>
</comment>
<comment type="interaction">
    <interactant intactId="EBI-1380492">
        <id>Q8TF42</id>
    </interactant>
    <interactant intactId="EBI-10981970">
        <id>Q5T749</id>
        <label>KPRP</label>
    </interactant>
    <organismsDiffer>false</organismsDiffer>
    <experiments>5</experiments>
</comment>
<comment type="interaction">
    <interactant intactId="EBI-1380492">
        <id>Q8TF42</id>
    </interactant>
    <interactant intactId="EBI-11959475">
        <id>P25791-3</id>
        <label>LMO2</label>
    </interactant>
    <organismsDiffer>false</organismsDiffer>
    <experiments>3</experiments>
</comment>
<comment type="interaction">
    <interactant intactId="EBI-1380492">
        <id>Q8TF42</id>
    </interactant>
    <interactant intactId="EBI-741037">
        <id>Q9BRK4</id>
        <label>LZTS2</label>
    </interactant>
    <organismsDiffer>false</organismsDiffer>
    <experiments>3</experiments>
</comment>
<comment type="interaction">
    <interactant intactId="EBI-1380492">
        <id>Q8TF42</id>
    </interactant>
    <interactant intactId="EBI-19157918">
        <id>Q9UJ68</id>
        <label>MSRA</label>
    </interactant>
    <organismsDiffer>false</organismsDiffer>
    <experiments>2</experiments>
</comment>
<comment type="interaction">
    <interactant intactId="EBI-1380492">
        <id>Q8TF42</id>
    </interactant>
    <interactant intactId="EBI-348567">
        <id>O75928-2</id>
        <label>PIAS2</label>
    </interactant>
    <organismsDiffer>false</organismsDiffer>
    <experiments>3</experiments>
</comment>
<comment type="interaction">
    <interactant intactId="EBI-1380492">
        <id>Q8TF42</id>
    </interactant>
    <interactant intactId="EBI-11986293">
        <id>P0CG20</id>
        <label>PRR35</label>
    </interactant>
    <organismsDiffer>false</organismsDiffer>
    <experiments>3</experiments>
</comment>
<comment type="interaction">
    <interactant intactId="EBI-1380492">
        <id>Q8TF42</id>
    </interactant>
    <interactant intactId="EBI-372273">
        <id>P20618</id>
        <label>PSMB1</label>
    </interactant>
    <organismsDiffer>false</organismsDiffer>
    <experiments>3</experiments>
</comment>
<comment type="interaction">
    <interactant intactId="EBI-1380492">
        <id>Q8TF42</id>
    </interactant>
    <interactant intactId="EBI-2860264">
        <id>Q16825</id>
        <label>PTPN21</label>
    </interactant>
    <organismsDiffer>false</organismsDiffer>
    <experiments>3</experiments>
</comment>
<comment type="interaction">
    <interactant intactId="EBI-1380492">
        <id>Q8TF42</id>
    </interactant>
    <interactant intactId="EBI-947779">
        <id>Q96PM5</id>
        <label>RCHY1</label>
    </interactant>
    <organismsDiffer>false</organismsDiffer>
    <experiments>8</experiments>
</comment>
<comment type="interaction">
    <interactant intactId="EBI-1380492">
        <id>Q8TF42</id>
    </interactant>
    <interactant intactId="EBI-10829018">
        <id>Q04864-2</id>
        <label>REL</label>
    </interactant>
    <organismsDiffer>false</organismsDiffer>
    <experiments>3</experiments>
</comment>
<comment type="interaction">
    <interactant intactId="EBI-1380492">
        <id>Q8TF42</id>
    </interactant>
    <interactant intactId="EBI-723313">
        <id>Q9NWF9</id>
        <label>RNF216</label>
    </interactant>
    <organismsDiffer>false</organismsDiffer>
    <experiments>3</experiments>
</comment>
<comment type="interaction">
    <interactant intactId="EBI-1380492">
        <id>Q8TF42</id>
    </interactant>
    <interactant intactId="EBI-10255185">
        <id>Q6ZT89</id>
        <label>SLC25A48</label>
    </interactant>
    <organismsDiffer>false</organismsDiffer>
    <experiments>3</experiments>
</comment>
<comment type="interaction">
    <interactant intactId="EBI-1380492">
        <id>Q8TF42</id>
    </interactant>
    <interactant intactId="EBI-742487">
        <id>O43597</id>
        <label>SPRY2</label>
    </interactant>
    <organismsDiffer>false</organismsDiffer>
    <experiments>3</experiments>
</comment>
<comment type="interaction">
    <interactant intactId="EBI-1380492">
        <id>Q8TF42</id>
    </interactant>
    <interactant intactId="EBI-78302">
        <id>P43405</id>
        <label>SYK</label>
    </interactant>
    <organismsDiffer>false</organismsDiffer>
    <experiments>2</experiments>
</comment>
<comment type="interaction">
    <interactant intactId="EBI-1380492">
        <id>Q8TF42</id>
    </interactant>
    <interactant intactId="EBI-13636688">
        <id>P15884-3</id>
        <label>TCF4</label>
    </interactant>
    <organismsDiffer>false</organismsDiffer>
    <experiments>3</experiments>
</comment>
<comment type="interaction">
    <interactant intactId="EBI-1380492">
        <id>Q8TF42</id>
    </interactant>
    <interactant intactId="EBI-11139477">
        <id>Q96N21</id>
        <label>TEPSIN</label>
    </interactant>
    <organismsDiffer>false</organismsDiffer>
    <experiments>3</experiments>
</comment>
<comment type="interaction">
    <interactant intactId="EBI-1380492">
        <id>Q8TF42</id>
    </interactant>
    <interactant intactId="EBI-1105254">
        <id>O95271</id>
        <label>TNKS</label>
    </interactant>
    <organismsDiffer>false</organismsDiffer>
    <experiments>3</experiments>
</comment>
<comment type="interaction">
    <interactant intactId="EBI-1380492">
        <id>Q8TF42</id>
    </interactant>
    <interactant intactId="EBI-11952721">
        <id>Q05BL1</id>
        <label>TP53BP2</label>
    </interactant>
    <organismsDiffer>false</organismsDiffer>
    <experiments>3</experiments>
</comment>
<comment type="interaction">
    <interactant intactId="EBI-1380492">
        <id>Q8TF42</id>
    </interactant>
    <interactant intactId="EBI-1380492">
        <id>Q8TF42</id>
        <label>UBASH3B</label>
    </interactant>
    <organismsDiffer>false</organismsDiffer>
    <experiments>4</experiments>
</comment>
<comment type="interaction">
    <interactant intactId="EBI-1380492">
        <id>Q8TF42</id>
    </interactant>
    <interactant intactId="EBI-4400866">
        <id>Q9H9H4</id>
        <label>VPS37B</label>
    </interactant>
    <organismsDiffer>false</organismsDiffer>
    <experiments>6</experiments>
</comment>
<comment type="interaction">
    <interactant intactId="EBI-1380492">
        <id>Q8TF42</id>
    </interactant>
    <interactant intactId="EBI-957615">
        <id>O00401</id>
        <label>WASL</label>
    </interactant>
    <organismsDiffer>false</organismsDiffer>
    <experiments>3</experiments>
</comment>
<comment type="subcellular location">
    <subcellularLocation>
        <location evidence="1">Cytoplasm</location>
    </subcellularLocation>
    <subcellularLocation>
        <location evidence="9">Nucleus</location>
    </subcellularLocation>
</comment>
<comment type="sequence caution" evidence="9">
    <conflict type="erroneous initiation">
        <sequence resource="EMBL-CDS" id="AAL16953"/>
    </conflict>
</comment>
<comment type="sequence caution" evidence="9">
    <conflict type="erroneous initiation">
        <sequence resource="EMBL-CDS" id="BAB85545"/>
    </conflict>
</comment>
<proteinExistence type="evidence at protein level"/>
<sequence>MAQYGHPSPLGMAAREELYSKVTPRRNRQQRPGTIKHGSALDVLLSMGFPRARAQKALASTGGRSVQAACDWLFSHVGDPFLDDPLPREYVLYLRPTGPLAQKLSDFWQQSKQICGKNKAHNIFPHITLCQFFMCEDSKVDALGEALQTTVSRWKCKFSAPLPLELYTSSNFIGLFVKEDSAEVLKKFAADFAAEAASKTEVHVEPHKKQLHVTLAYHFQASHLPTLEKLAQNIDVKLGCDWVATIFSRDIRFANHETLQVIYPYTPQNDDELELVPGDFIFMSPMEQTSTSEGWIYGTSLTTGCSGLLPENYITKADECSTWIFHGSYSILNTSSSNSLTFGDGVLERRPYEDQGLGETTPLTIICQPMQPLRVNSQPGPQKRCLFVCRHGERMDVVFGKYWLSQCFDAKGRYIRTNLNMPHSLPQRSGGFRDYEKDAPITVFGCMQARLVGEALLESNTIIDHVYCSPSLRCVQTAHNILKGLQQENHLKIRVEPGLFEWTKWVAGSTLPAWIPPSELAAANLSVDTTYRPHIPISKLVVSESYDTYISRSFQVTKEIISECKSKGNNILIVAHASSLEACTCQLQGLSPQNSKDFVQMVRKIPYLGFCSCEELGETGIWQLTDPPILPLTHGPTGGFNWRETLLQE</sequence>
<gene>
    <name type="primary">UBASH3B</name>
    <name type="synonym">KIAA1959</name>
    <name type="synonym">STS1</name>
</gene>
<protein>
    <recommendedName>
        <fullName>Ubiquitin-associated and SH3 domain-containing protein B</fullName>
        <ecNumber>3.1.3.48</ecNumber>
    </recommendedName>
    <alternativeName>
        <fullName>Cbl-interacting protein p70</fullName>
    </alternativeName>
    <alternativeName>
        <fullName>Suppressor of T-cell receptor signaling 1</fullName>
        <shortName>STS-1</shortName>
    </alternativeName>
    <alternativeName>
        <fullName>T-cell ubiquitin ligand 2</fullName>
        <shortName>TULA-2</shortName>
    </alternativeName>
    <alternativeName>
        <fullName>Tyrosine-protein phosphatase STS1/TULA2</fullName>
    </alternativeName>
</protein>
<dbReference type="EC" id="3.1.3.48"/>
<dbReference type="EMBL" id="AB075839">
    <property type="protein sequence ID" value="BAB85545.1"/>
    <property type="status" value="ALT_INIT"/>
    <property type="molecule type" value="mRNA"/>
</dbReference>
<dbReference type="EMBL" id="AK075203">
    <property type="protein sequence ID" value="BAC11468.1"/>
    <property type="molecule type" value="mRNA"/>
</dbReference>
<dbReference type="EMBL" id="AK222843">
    <property type="protein sequence ID" value="BAD96563.1"/>
    <property type="molecule type" value="mRNA"/>
</dbReference>
<dbReference type="EMBL" id="AK222846">
    <property type="protein sequence ID" value="BAD96566.1"/>
    <property type="molecule type" value="mRNA"/>
</dbReference>
<dbReference type="EMBL" id="BC007541">
    <property type="protein sequence ID" value="AAH07541.2"/>
    <property type="molecule type" value="mRNA"/>
</dbReference>
<dbReference type="EMBL" id="AF425252">
    <property type="protein sequence ID" value="AAL16953.1"/>
    <property type="status" value="ALT_INIT"/>
    <property type="molecule type" value="mRNA"/>
</dbReference>
<dbReference type="CCDS" id="CCDS31694.1"/>
<dbReference type="RefSeq" id="NP_116262.2">
    <property type="nucleotide sequence ID" value="NM_032873.4"/>
</dbReference>
<dbReference type="PDB" id="2CPW">
    <property type="method" value="NMR"/>
    <property type="chains" value="A=26-76"/>
</dbReference>
<dbReference type="PDB" id="2E5K">
    <property type="method" value="NMR"/>
    <property type="chains" value="A=248-328"/>
</dbReference>
<dbReference type="PDB" id="5VR6">
    <property type="method" value="X-ray"/>
    <property type="resolution" value="1.87 A"/>
    <property type="chains" value="A/B=384-649"/>
</dbReference>
<dbReference type="PDB" id="5W5G">
    <property type="method" value="X-ray"/>
    <property type="resolution" value="2.48 A"/>
    <property type="chains" value="A/B/C=383-644"/>
</dbReference>
<dbReference type="PDB" id="8U5M">
    <property type="method" value="X-ray"/>
    <property type="resolution" value="2.46 A"/>
    <property type="chains" value="A/B/C/D/E/F=380-649"/>
</dbReference>
<dbReference type="PDB" id="8U7E">
    <property type="method" value="X-ray"/>
    <property type="resolution" value="2.63 A"/>
    <property type="chains" value="A/B/C/D/E/F=380-649"/>
</dbReference>
<dbReference type="PDBsum" id="2CPW"/>
<dbReference type="PDBsum" id="2E5K"/>
<dbReference type="PDBsum" id="5VR6"/>
<dbReference type="PDBsum" id="5W5G"/>
<dbReference type="PDBsum" id="8U5M"/>
<dbReference type="PDBsum" id="8U7E"/>
<dbReference type="BMRB" id="Q8TF42"/>
<dbReference type="SMR" id="Q8TF42"/>
<dbReference type="BioGRID" id="124390">
    <property type="interactions" value="150"/>
</dbReference>
<dbReference type="FunCoup" id="Q8TF42">
    <property type="interactions" value="1497"/>
</dbReference>
<dbReference type="IntAct" id="Q8TF42">
    <property type="interactions" value="73"/>
</dbReference>
<dbReference type="MINT" id="Q8TF42"/>
<dbReference type="STRING" id="9606.ENSP00000284273"/>
<dbReference type="DEPOD" id="UBASH3B"/>
<dbReference type="GlyCosmos" id="Q8TF42">
    <property type="glycosylation" value="1 site, 1 glycan"/>
</dbReference>
<dbReference type="GlyGen" id="Q8TF42">
    <property type="glycosylation" value="3 sites, 1 O-linked glycan (3 sites)"/>
</dbReference>
<dbReference type="iPTMnet" id="Q8TF42"/>
<dbReference type="PhosphoSitePlus" id="Q8TF42"/>
<dbReference type="BioMuta" id="UBASH3B"/>
<dbReference type="DMDM" id="110287974"/>
<dbReference type="jPOST" id="Q8TF42"/>
<dbReference type="MassIVE" id="Q8TF42"/>
<dbReference type="PaxDb" id="9606-ENSP00000284273"/>
<dbReference type="PeptideAtlas" id="Q8TF42"/>
<dbReference type="ProteomicsDB" id="74552"/>
<dbReference type="Pumba" id="Q8TF42"/>
<dbReference type="Antibodypedia" id="32801">
    <property type="antibodies" value="148 antibodies from 26 providers"/>
</dbReference>
<dbReference type="DNASU" id="84959"/>
<dbReference type="Ensembl" id="ENST00000284273.6">
    <property type="protein sequence ID" value="ENSP00000284273.5"/>
    <property type="gene ID" value="ENSG00000154127.10"/>
</dbReference>
<dbReference type="GeneID" id="84959"/>
<dbReference type="KEGG" id="hsa:84959"/>
<dbReference type="MANE-Select" id="ENST00000284273.6">
    <property type="protein sequence ID" value="ENSP00000284273.5"/>
    <property type="RefSeq nucleotide sequence ID" value="NM_032873.5"/>
    <property type="RefSeq protein sequence ID" value="NP_116262.2"/>
</dbReference>
<dbReference type="UCSC" id="uc001pyi.5">
    <property type="organism name" value="human"/>
</dbReference>
<dbReference type="AGR" id="HGNC:29884"/>
<dbReference type="CTD" id="84959"/>
<dbReference type="DisGeNET" id="84959"/>
<dbReference type="GeneCards" id="UBASH3B"/>
<dbReference type="HGNC" id="HGNC:29884">
    <property type="gene designation" value="UBASH3B"/>
</dbReference>
<dbReference type="HPA" id="ENSG00000154127">
    <property type="expression patterns" value="Tissue enhanced (brain, lymphoid tissue, placenta)"/>
</dbReference>
<dbReference type="MIM" id="609201">
    <property type="type" value="gene"/>
</dbReference>
<dbReference type="neXtProt" id="NX_Q8TF42"/>
<dbReference type="OpenTargets" id="ENSG00000154127"/>
<dbReference type="PharmGKB" id="PA162407840"/>
<dbReference type="VEuPathDB" id="HostDB:ENSG00000154127"/>
<dbReference type="eggNOG" id="KOG3734">
    <property type="taxonomic scope" value="Eukaryota"/>
</dbReference>
<dbReference type="GeneTree" id="ENSGT00940000156097"/>
<dbReference type="HOGENOM" id="CLU_016516_1_0_1"/>
<dbReference type="InParanoid" id="Q8TF42"/>
<dbReference type="OMA" id="NMPKEIP"/>
<dbReference type="OrthoDB" id="414418at2759"/>
<dbReference type="PAN-GO" id="Q8TF42">
    <property type="GO annotations" value="10 GO annotations based on evolutionary models"/>
</dbReference>
<dbReference type="PhylomeDB" id="Q8TF42"/>
<dbReference type="TreeFam" id="TF313334"/>
<dbReference type="PathwayCommons" id="Q8TF42"/>
<dbReference type="SignaLink" id="Q8TF42"/>
<dbReference type="SIGNOR" id="Q8TF42"/>
<dbReference type="BioGRID-ORCS" id="84959">
    <property type="hits" value="22 hits in 1172 CRISPR screens"/>
</dbReference>
<dbReference type="ChiTaRS" id="UBASH3B">
    <property type="organism name" value="human"/>
</dbReference>
<dbReference type="EvolutionaryTrace" id="Q8TF42"/>
<dbReference type="GeneWiki" id="STS-1_(gene)"/>
<dbReference type="GenomeRNAi" id="84959"/>
<dbReference type="Pharos" id="Q8TF42">
    <property type="development level" value="Tbio"/>
</dbReference>
<dbReference type="PRO" id="PR:Q8TF42"/>
<dbReference type="Proteomes" id="UP000005640">
    <property type="component" value="Chromosome 11"/>
</dbReference>
<dbReference type="RNAct" id="Q8TF42">
    <property type="molecule type" value="protein"/>
</dbReference>
<dbReference type="Bgee" id="ENSG00000154127">
    <property type="expression patterns" value="Expressed in pons and 149 other cell types or tissues"/>
</dbReference>
<dbReference type="GO" id="GO:0005737">
    <property type="term" value="C:cytoplasm"/>
    <property type="evidence" value="ECO:0000318"/>
    <property type="project" value="GO_Central"/>
</dbReference>
<dbReference type="GO" id="GO:0005634">
    <property type="term" value="C:nucleus"/>
    <property type="evidence" value="ECO:0007669"/>
    <property type="project" value="UniProtKB-SubCell"/>
</dbReference>
<dbReference type="GO" id="GO:0042802">
    <property type="term" value="F:identical protein binding"/>
    <property type="evidence" value="ECO:0000353"/>
    <property type="project" value="IntAct"/>
</dbReference>
<dbReference type="GO" id="GO:0051219">
    <property type="term" value="F:phosphoprotein binding"/>
    <property type="evidence" value="ECO:0007669"/>
    <property type="project" value="Ensembl"/>
</dbReference>
<dbReference type="GO" id="GO:0004725">
    <property type="term" value="F:protein tyrosine phosphatase activity"/>
    <property type="evidence" value="ECO:0000318"/>
    <property type="project" value="GO_Central"/>
</dbReference>
<dbReference type="GO" id="GO:0031625">
    <property type="term" value="F:ubiquitin protein ligase binding"/>
    <property type="evidence" value="ECO:0007669"/>
    <property type="project" value="Ensembl"/>
</dbReference>
<dbReference type="GO" id="GO:0038063">
    <property type="term" value="P:collagen-activated tyrosine kinase receptor signaling pathway"/>
    <property type="evidence" value="ECO:0000318"/>
    <property type="project" value="GO_Central"/>
</dbReference>
<dbReference type="GO" id="GO:0045779">
    <property type="term" value="P:negative regulation of bone resorption"/>
    <property type="evidence" value="ECO:0000318"/>
    <property type="project" value="GO_Central"/>
</dbReference>
<dbReference type="GO" id="GO:0045671">
    <property type="term" value="P:negative regulation of osteoclast differentiation"/>
    <property type="evidence" value="ECO:0007669"/>
    <property type="project" value="Ensembl"/>
</dbReference>
<dbReference type="GO" id="GO:0090331">
    <property type="term" value="P:negative regulation of platelet aggregation"/>
    <property type="evidence" value="ECO:0007669"/>
    <property type="project" value="Ensembl"/>
</dbReference>
<dbReference type="GO" id="GO:0009968">
    <property type="term" value="P:negative regulation of signal transduction"/>
    <property type="evidence" value="ECO:0000318"/>
    <property type="project" value="GO_Central"/>
</dbReference>
<dbReference type="GO" id="GO:0070527">
    <property type="term" value="P:platelet aggregation"/>
    <property type="evidence" value="ECO:0000318"/>
    <property type="project" value="GO_Central"/>
</dbReference>
<dbReference type="GO" id="GO:0045670">
    <property type="term" value="P:regulation of osteoclast differentiation"/>
    <property type="evidence" value="ECO:0000318"/>
    <property type="project" value="GO_Central"/>
</dbReference>
<dbReference type="GO" id="GO:0051279">
    <property type="term" value="P:regulation of release of sequestered calcium ion into cytosol"/>
    <property type="evidence" value="ECO:0000318"/>
    <property type="project" value="GO_Central"/>
</dbReference>
<dbReference type="CDD" id="cd07067">
    <property type="entry name" value="HP_PGM_like"/>
    <property type="match status" value="1"/>
</dbReference>
<dbReference type="CDD" id="cd11936">
    <property type="entry name" value="SH3_UBASH3B"/>
    <property type="match status" value="1"/>
</dbReference>
<dbReference type="CDD" id="cd14301">
    <property type="entry name" value="UBA_UBS3B"/>
    <property type="match status" value="1"/>
</dbReference>
<dbReference type="FunFam" id="3.40.50.1240:FF:000008">
    <property type="entry name" value="Ubiquitin associated and SH3 domain containing B"/>
    <property type="match status" value="1"/>
</dbReference>
<dbReference type="FunFam" id="2.30.30.40:FF:000052">
    <property type="entry name" value="Ubiquitin-associated and SH3 domain-containing protein B"/>
    <property type="match status" value="1"/>
</dbReference>
<dbReference type="FunFam" id="3.90.1140.10:FF:000001">
    <property type="entry name" value="Ubiquitin-associated and SH3 domain-containing protein B"/>
    <property type="match status" value="1"/>
</dbReference>
<dbReference type="FunFam" id="1.10.8.10:FF:000051">
    <property type="entry name" value="ubiquitin-associated and SH3 domain-containing protein B"/>
    <property type="match status" value="1"/>
</dbReference>
<dbReference type="Gene3D" id="3.90.1140.10">
    <property type="entry name" value="Cyclic phosphodiesterase"/>
    <property type="match status" value="1"/>
</dbReference>
<dbReference type="Gene3D" id="1.10.8.10">
    <property type="entry name" value="DNA helicase RuvA subunit, C-terminal domain"/>
    <property type="match status" value="1"/>
</dbReference>
<dbReference type="Gene3D" id="3.40.50.1240">
    <property type="entry name" value="Phosphoglycerate mutase-like"/>
    <property type="match status" value="1"/>
</dbReference>
<dbReference type="Gene3D" id="2.30.30.40">
    <property type="entry name" value="SH3 Domains"/>
    <property type="match status" value="1"/>
</dbReference>
<dbReference type="InterPro" id="IPR013078">
    <property type="entry name" value="His_Pase_superF_clade-1"/>
</dbReference>
<dbReference type="InterPro" id="IPR029033">
    <property type="entry name" value="His_PPase_superfam"/>
</dbReference>
<dbReference type="InterPro" id="IPR051710">
    <property type="entry name" value="Phosphatase_SH3-domain"/>
</dbReference>
<dbReference type="InterPro" id="IPR036028">
    <property type="entry name" value="SH3-like_dom_sf"/>
</dbReference>
<dbReference type="InterPro" id="IPR001452">
    <property type="entry name" value="SH3_domain"/>
</dbReference>
<dbReference type="InterPro" id="IPR015940">
    <property type="entry name" value="UBA"/>
</dbReference>
<dbReference type="InterPro" id="IPR009060">
    <property type="entry name" value="UBA-like_sf"/>
</dbReference>
<dbReference type="InterPro" id="IPR035632">
    <property type="entry name" value="UBASH3B_SH3"/>
</dbReference>
<dbReference type="PANTHER" id="PTHR16469">
    <property type="entry name" value="UBIQUITIN-ASSOCIATED AND SH3 DOMAIN-CONTAINING BA-RELATED"/>
    <property type="match status" value="1"/>
</dbReference>
<dbReference type="PANTHER" id="PTHR16469:SF29">
    <property type="entry name" value="UBIQUITIN-ASSOCIATED AND SH3 DOMAIN-CONTAINING PROTEIN B"/>
    <property type="match status" value="1"/>
</dbReference>
<dbReference type="Pfam" id="PF00300">
    <property type="entry name" value="His_Phos_1"/>
    <property type="match status" value="1"/>
</dbReference>
<dbReference type="Pfam" id="PF14604">
    <property type="entry name" value="SH3_9"/>
    <property type="match status" value="1"/>
</dbReference>
<dbReference type="Pfam" id="PF22562">
    <property type="entry name" value="UBA_7"/>
    <property type="match status" value="1"/>
</dbReference>
<dbReference type="SMART" id="SM00326">
    <property type="entry name" value="SH3"/>
    <property type="match status" value="1"/>
</dbReference>
<dbReference type="SMART" id="SM00165">
    <property type="entry name" value="UBA"/>
    <property type="match status" value="1"/>
</dbReference>
<dbReference type="SUPFAM" id="SSF53254">
    <property type="entry name" value="Phosphoglycerate mutase-like"/>
    <property type="match status" value="1"/>
</dbReference>
<dbReference type="SUPFAM" id="SSF50044">
    <property type="entry name" value="SH3-domain"/>
    <property type="match status" value="1"/>
</dbReference>
<dbReference type="SUPFAM" id="SSF46934">
    <property type="entry name" value="UBA-like"/>
    <property type="match status" value="1"/>
</dbReference>
<dbReference type="PROSITE" id="PS50002">
    <property type="entry name" value="SH3"/>
    <property type="match status" value="1"/>
</dbReference>
<dbReference type="PROSITE" id="PS50030">
    <property type="entry name" value="UBA"/>
    <property type="match status" value="1"/>
</dbReference>
<organism>
    <name type="scientific">Homo sapiens</name>
    <name type="common">Human</name>
    <dbReference type="NCBI Taxonomy" id="9606"/>
    <lineage>
        <taxon>Eukaryota</taxon>
        <taxon>Metazoa</taxon>
        <taxon>Chordata</taxon>
        <taxon>Craniata</taxon>
        <taxon>Vertebrata</taxon>
        <taxon>Euteleostomi</taxon>
        <taxon>Mammalia</taxon>
        <taxon>Eutheria</taxon>
        <taxon>Euarchontoglires</taxon>
        <taxon>Primates</taxon>
        <taxon>Haplorrhini</taxon>
        <taxon>Catarrhini</taxon>
        <taxon>Hominidae</taxon>
        <taxon>Homo</taxon>
    </lineage>
</organism>
<accession>Q8TF42</accession>
<accession>Q53GT5</accession>
<accession>Q53GT8</accession>
<accession>Q8NBV7</accession>
<accession>Q96IG9</accession>
<accession>Q96NZ2</accession>
<reference key="1">
    <citation type="journal article" date="2001" name="DNA Res.">
        <title>Prediction of the coding sequences of unidentified human genes. XXII. The complete sequences of 50 new cDNA clones which code for large proteins.</title>
        <authorList>
            <person name="Nagase T."/>
            <person name="Kikuno R."/>
            <person name="Ohara O."/>
        </authorList>
    </citation>
    <scope>NUCLEOTIDE SEQUENCE [LARGE SCALE MRNA]</scope>
    <source>
        <tissue>Brain</tissue>
    </source>
</reference>
<reference key="2">
    <citation type="journal article" date="2005" name="DNA Res.">
        <title>Signal sequence and keyword trap in silico for selection of full-length human cDNAs encoding secretion or membrane proteins from oligo-capped cDNA libraries.</title>
        <authorList>
            <person name="Otsuki T."/>
            <person name="Ota T."/>
            <person name="Nishikawa T."/>
            <person name="Hayashi K."/>
            <person name="Suzuki Y."/>
            <person name="Yamamoto J."/>
            <person name="Wakamatsu A."/>
            <person name="Kimura K."/>
            <person name="Sakamoto K."/>
            <person name="Hatano N."/>
            <person name="Kawai Y."/>
            <person name="Ishii S."/>
            <person name="Saito K."/>
            <person name="Kojima S."/>
            <person name="Sugiyama T."/>
            <person name="Ono T."/>
            <person name="Okano K."/>
            <person name="Yoshikawa Y."/>
            <person name="Aotsuka S."/>
            <person name="Sasaki N."/>
            <person name="Hattori A."/>
            <person name="Okumura K."/>
            <person name="Nagai K."/>
            <person name="Sugano S."/>
            <person name="Isogai T."/>
        </authorList>
    </citation>
    <scope>NUCLEOTIDE SEQUENCE [LARGE SCALE MRNA]</scope>
    <source>
        <tissue>Placenta</tissue>
    </source>
</reference>
<reference key="3">
    <citation type="submission" date="2005-04" db="EMBL/GenBank/DDBJ databases">
        <authorList>
            <person name="Suzuki Y."/>
            <person name="Sugano S."/>
            <person name="Totoki Y."/>
            <person name="Toyoda A."/>
            <person name="Takeda T."/>
            <person name="Sakaki Y."/>
            <person name="Tanaka A."/>
            <person name="Yokoyama S."/>
        </authorList>
    </citation>
    <scope>NUCLEOTIDE SEQUENCE [LARGE SCALE MRNA]</scope>
    <scope>VARIANT THR-68</scope>
    <source>
        <tissue>Liver</tissue>
    </source>
</reference>
<reference key="4">
    <citation type="journal article" date="2004" name="Genome Res.">
        <title>The status, quality, and expansion of the NIH full-length cDNA project: the Mammalian Gene Collection (MGC).</title>
        <authorList>
            <consortium name="The MGC Project Team"/>
        </authorList>
    </citation>
    <scope>NUCLEOTIDE SEQUENCE [LARGE SCALE MRNA]</scope>
    <source>
        <tissue>Kidney</tissue>
    </source>
</reference>
<reference key="5">
    <citation type="submission" date="2005-11" db="UniProtKB">
        <authorList>
            <person name="Bienvenut W.V."/>
            <person name="Claeys D."/>
        </authorList>
    </citation>
    <scope>PROTEIN SEQUENCE OF 89-112; 188-199; 230-237 AND 417-428</scope>
    <scope>IDENTIFICATION BY MASS SPECTROMETRY</scope>
    <source>
        <tissue>Platelet</tissue>
    </source>
</reference>
<reference key="6">
    <citation type="submission" date="2001-09" db="EMBL/GenBank/DDBJ databases">
        <title>A novel SH3 containing protein is phosphorylated by the nm23-H1 protein kinase activity in vitro and shows reduced mRNA expression in human tumors.</title>
        <authorList>
            <person name="Engel M."/>
            <person name="Seifert M."/>
            <person name="Maschlanka M."/>
            <person name="Welter C."/>
        </authorList>
    </citation>
    <scope>NUCLEOTIDE SEQUENCE [MRNA] OF 116-649</scope>
</reference>
<reference key="7">
    <citation type="journal article" date="2003" name="Nature">
        <title>Proteomic characterization of the human centrosome by protein correlation profiling.</title>
        <authorList>
            <person name="Andersen J.S."/>
            <person name="Wilkinson C.J."/>
            <person name="Mayor T."/>
            <person name="Mortensen P."/>
            <person name="Nigg E.A."/>
            <person name="Mann M."/>
        </authorList>
    </citation>
    <scope>IDENTIFICATION BY MASS SPECTROMETRY</scope>
    <source>
        <tissue>Lymphoblast</tissue>
    </source>
</reference>
<reference key="8">
    <citation type="journal article" date="2004" name="J. Biol. Chem.">
        <title>Suppressors of T-cell receptor signaling Sts-1 and Sts-2 bind to Cbl and inhibit endocytosis of receptor tyrosine kinases.</title>
        <authorList>
            <person name="Kowanetz K."/>
            <person name="Crosetto N."/>
            <person name="Haglund K."/>
            <person name="Schmidt M.H."/>
            <person name="Heldin C.-H."/>
            <person name="Dikic I."/>
        </authorList>
    </citation>
    <scope>FUNCTION</scope>
    <scope>INTERACTION WITH CBL AND UBIQUITIN</scope>
    <scope>IDENTIFICATION IN A COMPLEX WITH EGFR</scope>
</reference>
<reference key="9">
    <citation type="journal article" date="2007" name="FEBS Lett.">
        <title>Suppressor of T-cell receptor signalling 1 and 2 differentially regulate endocytosis and signalling of receptor tyrosine kinases.</title>
        <authorList>
            <person name="Raguz J."/>
            <person name="Wagner S."/>
            <person name="Dikic I."/>
            <person name="Hoeller D."/>
        </authorList>
    </citation>
    <scope>FUNCTION</scope>
    <scope>CATALYTIC ACTIVITY</scope>
</reference>
<reference key="10">
    <citation type="journal article" date="2008" name="Proc. Natl. Acad. Sci. U.S.A.">
        <title>A quantitative atlas of mitotic phosphorylation.</title>
        <authorList>
            <person name="Dephoure N."/>
            <person name="Zhou C."/>
            <person name="Villen J."/>
            <person name="Beausoleil S.A."/>
            <person name="Bakalarski C.E."/>
            <person name="Elledge S.J."/>
            <person name="Gygi S.P."/>
        </authorList>
    </citation>
    <scope>PHOSPHORYLATION [LARGE SCALE ANALYSIS] AT SER-20 AND THR-23</scope>
    <scope>IDENTIFICATION BY MASS SPECTROMETRY [LARGE SCALE ANALYSIS]</scope>
    <source>
        <tissue>Cervix carcinoma</tissue>
    </source>
</reference>
<reference key="11">
    <citation type="journal article" date="2016" name="J. Exp. Med.">
        <title>Otud7b facilitates T cell activation and inflammatory responses by regulating Zap70 ubiquitination.</title>
        <authorList>
            <person name="Hu H."/>
            <person name="Wang H."/>
            <person name="Xiao Y."/>
            <person name="Jin J."/>
            <person name="Chang J.H."/>
            <person name="Zou Q."/>
            <person name="Xie X."/>
            <person name="Cheng X."/>
            <person name="Sun S.C."/>
        </authorList>
    </citation>
    <scope>INTERACTION WITH ZAP70</scope>
</reference>
<reference key="12">
    <citation type="submission" date="2005-11" db="PDB data bank">
        <title>Solution structure of RSGI RUH-031, a UBA domain from human cDNA.</title>
        <authorList>
            <consortium name="RIKEN structural genomics initiative (RSGI)"/>
        </authorList>
    </citation>
    <scope>STRUCTURE BY NMR OF 26-76</scope>
</reference>
<reference key="13">
    <citation type="submission" date="2007-06" db="PDB data bank">
        <title>Solution structure of SH3 domain in suppressor of T-cell receptor signaling 1.</title>
        <authorList>
            <consortium name="RIKEN structural genomics initiative (RSGI)"/>
        </authorList>
    </citation>
    <scope>STRUCTURE BY NMR OF 248-328</scope>
</reference>
<name>UBS3B_HUMAN</name>
<feature type="chain" id="PRO_0000245508" description="Ubiquitin-associated and SH3 domain-containing protein B">
    <location>
        <begin position="1"/>
        <end position="649"/>
    </location>
</feature>
<feature type="domain" description="UBA" evidence="4">
    <location>
        <begin position="27"/>
        <end position="76"/>
    </location>
</feature>
<feature type="domain" description="SH3" evidence="3">
    <location>
        <begin position="254"/>
        <end position="319"/>
    </location>
</feature>
<feature type="region of interest" description="Protein tyrosine phosphatase" evidence="1">
    <location>
        <begin position="380"/>
        <end position="649"/>
    </location>
</feature>
<feature type="active site" evidence="1">
    <location>
        <position position="390"/>
    </location>
</feature>
<feature type="active site" description="Tele-phosphohistidine intermediate" evidence="1">
    <location>
        <position position="391"/>
    </location>
</feature>
<feature type="active site" evidence="1">
    <location>
        <position position="576"/>
    </location>
</feature>
<feature type="modified residue" description="Phosphoserine" evidence="10">
    <location>
        <position position="20"/>
    </location>
</feature>
<feature type="modified residue" description="Phosphothreonine" evidence="10">
    <location>
        <position position="23"/>
    </location>
</feature>
<feature type="sequence variant" id="VAR_052676" description="In dbSNP:rs12790613." evidence="8">
    <original>A</original>
    <variation>T</variation>
    <location>
        <position position="68"/>
    </location>
</feature>
<feature type="sequence variant" id="VAR_061923" description="In dbSNP:rs35343548.">
    <original>N</original>
    <variation>S</variation>
    <location>
        <position position="569"/>
    </location>
</feature>
<feature type="sequence conflict" description="In Ref. 3; BAD96563/BAD96566." evidence="9" ref="3">
    <original>H</original>
    <variation>R</variation>
    <location>
        <position position="465"/>
    </location>
</feature>
<feature type="strand" evidence="11">
    <location>
        <begin position="34"/>
        <end position="36"/>
    </location>
</feature>
<feature type="helix" evidence="11">
    <location>
        <begin position="40"/>
        <end position="47"/>
    </location>
</feature>
<feature type="helix" evidence="11">
    <location>
        <begin position="51"/>
        <end position="60"/>
    </location>
</feature>
<feature type="turn" evidence="11">
    <location>
        <begin position="61"/>
        <end position="63"/>
    </location>
</feature>
<feature type="helix" evidence="11">
    <location>
        <begin position="66"/>
        <end position="74"/>
    </location>
</feature>
<feature type="strand" evidence="12">
    <location>
        <begin position="252"/>
        <end position="254"/>
    </location>
</feature>
<feature type="strand" evidence="12">
    <location>
        <begin position="257"/>
        <end position="261"/>
    </location>
</feature>
<feature type="strand" evidence="12">
    <location>
        <begin position="268"/>
        <end position="272"/>
    </location>
</feature>
<feature type="strand" evidence="12">
    <location>
        <begin position="280"/>
        <end position="283"/>
    </location>
</feature>
<feature type="helix" evidence="12">
    <location>
        <begin position="285"/>
        <end position="287"/>
    </location>
</feature>
<feature type="turn" evidence="12">
    <location>
        <begin position="291"/>
        <end position="294"/>
    </location>
</feature>
<feature type="strand" evidence="12">
    <location>
        <begin position="295"/>
        <end position="303"/>
    </location>
</feature>
<feature type="strand" evidence="12">
    <location>
        <begin position="306"/>
        <end position="310"/>
    </location>
</feature>
<feature type="helix" evidence="12">
    <location>
        <begin position="311"/>
        <end position="313"/>
    </location>
</feature>
<feature type="strand" evidence="12">
    <location>
        <begin position="314"/>
        <end position="316"/>
    </location>
</feature>
<feature type="strand" evidence="13">
    <location>
        <begin position="385"/>
        <end position="390"/>
    </location>
</feature>
<feature type="helix" evidence="13">
    <location>
        <begin position="395"/>
        <end position="399"/>
    </location>
</feature>
<feature type="helix" evidence="13">
    <location>
        <begin position="403"/>
        <end position="407"/>
    </location>
</feature>
<feature type="helix" evidence="13">
    <location>
        <begin position="432"/>
        <end position="437"/>
    </location>
</feature>
<feature type="helix" evidence="13">
    <location>
        <begin position="443"/>
        <end position="458"/>
    </location>
</feature>
<feature type="strand" evidence="13">
    <location>
        <begin position="465"/>
        <end position="468"/>
    </location>
</feature>
<feature type="helix" evidence="13">
    <location>
        <begin position="472"/>
        <end position="485"/>
    </location>
</feature>
<feature type="turn" evidence="13">
    <location>
        <begin position="488"/>
        <end position="490"/>
    </location>
</feature>
<feature type="strand" evidence="13">
    <location>
        <begin position="493"/>
        <end position="495"/>
    </location>
</feature>
<feature type="helix" evidence="13">
    <location>
        <begin position="497"/>
        <end position="499"/>
    </location>
</feature>
<feature type="helix" evidence="13">
    <location>
        <begin position="503"/>
        <end position="505"/>
    </location>
</feature>
<feature type="strand" evidence="13">
    <location>
        <begin position="508"/>
        <end position="510"/>
    </location>
</feature>
<feature type="helix" evidence="13">
    <location>
        <begin position="517"/>
        <end position="522"/>
    </location>
</feature>
<feature type="helix" evidence="13">
    <location>
        <begin position="537"/>
        <end position="539"/>
    </location>
</feature>
<feature type="helix" evidence="13">
    <location>
        <begin position="546"/>
        <end position="564"/>
    </location>
</feature>
<feature type="strand" evidence="14">
    <location>
        <begin position="565"/>
        <end position="567"/>
    </location>
</feature>
<feature type="strand" evidence="13">
    <location>
        <begin position="569"/>
        <end position="575"/>
    </location>
</feature>
<feature type="helix" evidence="13">
    <location>
        <begin position="579"/>
        <end position="582"/>
    </location>
</feature>
<feature type="turn" evidence="13">
    <location>
        <begin position="583"/>
        <end position="585"/>
    </location>
</feature>
<feature type="helix" evidence="13">
    <location>
        <begin position="586"/>
        <end position="588"/>
    </location>
</feature>
<feature type="helix" evidence="13">
    <location>
        <begin position="595"/>
        <end position="602"/>
    </location>
</feature>
<feature type="strand" evidence="13">
    <location>
        <begin position="610"/>
        <end position="615"/>
    </location>
</feature>
<feature type="turn" evidence="13">
    <location>
        <begin position="617"/>
        <end position="619"/>
    </location>
</feature>
<feature type="strand" evidence="13">
    <location>
        <begin position="622"/>
        <end position="625"/>
    </location>
</feature>
<feature type="helix" evidence="13">
    <location>
        <begin position="642"/>
        <end position="645"/>
    </location>
</feature>
<evidence type="ECO:0000250" key="1"/>
<evidence type="ECO:0000250" key="2">
    <source>
        <dbReference type="UniProtKB" id="Q8BGG7"/>
    </source>
</evidence>
<evidence type="ECO:0000255" key="3">
    <source>
        <dbReference type="PROSITE-ProRule" id="PRU00192"/>
    </source>
</evidence>
<evidence type="ECO:0000255" key="4">
    <source>
        <dbReference type="PROSITE-ProRule" id="PRU00212"/>
    </source>
</evidence>
<evidence type="ECO:0000269" key="5">
    <source>
    </source>
</evidence>
<evidence type="ECO:0000269" key="6">
    <source>
    </source>
</evidence>
<evidence type="ECO:0000269" key="7">
    <source>
    </source>
</evidence>
<evidence type="ECO:0000269" key="8">
    <source ref="3"/>
</evidence>
<evidence type="ECO:0000305" key="9"/>
<evidence type="ECO:0007744" key="10">
    <source>
    </source>
</evidence>
<evidence type="ECO:0007829" key="11">
    <source>
        <dbReference type="PDB" id="2CPW"/>
    </source>
</evidence>
<evidence type="ECO:0007829" key="12">
    <source>
        <dbReference type="PDB" id="2E5K"/>
    </source>
</evidence>
<evidence type="ECO:0007829" key="13">
    <source>
        <dbReference type="PDB" id="5VR6"/>
    </source>
</evidence>
<evidence type="ECO:0007829" key="14">
    <source>
        <dbReference type="PDB" id="5W5G"/>
    </source>
</evidence>